<protein>
    <recommendedName>
        <fullName evidence="1">Nucleoside diphosphate kinase</fullName>
        <shortName evidence="1">NDK</shortName>
        <shortName evidence="1">NDP kinase</shortName>
        <ecNumber evidence="1">2.7.4.6</ecNumber>
    </recommendedName>
    <alternativeName>
        <fullName evidence="1">Nucleoside-2-P kinase</fullName>
    </alternativeName>
</protein>
<accession>A1KLE1</accession>
<evidence type="ECO:0000255" key="1">
    <source>
        <dbReference type="HAMAP-Rule" id="MF_00451"/>
    </source>
</evidence>
<reference key="1">
    <citation type="journal article" date="2007" name="Proc. Natl. Acad. Sci. U.S.A.">
        <title>Genome plasticity of BCG and impact on vaccine efficacy.</title>
        <authorList>
            <person name="Brosch R."/>
            <person name="Gordon S.V."/>
            <person name="Garnier T."/>
            <person name="Eiglmeier K."/>
            <person name="Frigui W."/>
            <person name="Valenti P."/>
            <person name="Dos Santos S."/>
            <person name="Duthoy S."/>
            <person name="Lacroix C."/>
            <person name="Garcia-Pelayo C."/>
            <person name="Inwald J.K."/>
            <person name="Golby P."/>
            <person name="Garcia J.N."/>
            <person name="Hewinson R.G."/>
            <person name="Behr M.A."/>
            <person name="Quail M.A."/>
            <person name="Churcher C."/>
            <person name="Barrell B.G."/>
            <person name="Parkhill J."/>
            <person name="Cole S.T."/>
        </authorList>
    </citation>
    <scope>NUCLEOTIDE SEQUENCE [LARGE SCALE GENOMIC DNA]</scope>
    <source>
        <strain>BCG / Pasteur 1173P2</strain>
    </source>
</reference>
<sequence length="136" mass="14508">MTERTLVLIKPDGIERQLIGEIISRIERKGLTIAALQLRTVSAELASQHYAEHEGKPFFGSLLEFITSGPVVAAIVEGTRAIAAVRQLAGGTDPVQAAAPGTIRGDFALETQFNLVHGSDSAESAQREIALWFPGA</sequence>
<proteinExistence type="inferred from homology"/>
<dbReference type="EC" id="2.7.4.6" evidence="1"/>
<dbReference type="EMBL" id="AM408590">
    <property type="protein sequence ID" value="CAL72453.1"/>
    <property type="molecule type" value="Genomic_DNA"/>
</dbReference>
<dbReference type="RefSeq" id="WP_003412592.1">
    <property type="nucleotide sequence ID" value="NC_008769.1"/>
</dbReference>
<dbReference type="SMR" id="A1KLE1"/>
<dbReference type="GeneID" id="45426435"/>
<dbReference type="KEGG" id="mbb:BCG_2465c"/>
<dbReference type="HOGENOM" id="CLU_060216_6_3_11"/>
<dbReference type="Proteomes" id="UP000001472">
    <property type="component" value="Chromosome"/>
</dbReference>
<dbReference type="GO" id="GO:0005737">
    <property type="term" value="C:cytoplasm"/>
    <property type="evidence" value="ECO:0007669"/>
    <property type="project" value="UniProtKB-SubCell"/>
</dbReference>
<dbReference type="GO" id="GO:0005524">
    <property type="term" value="F:ATP binding"/>
    <property type="evidence" value="ECO:0007669"/>
    <property type="project" value="UniProtKB-UniRule"/>
</dbReference>
<dbReference type="GO" id="GO:0046872">
    <property type="term" value="F:metal ion binding"/>
    <property type="evidence" value="ECO:0007669"/>
    <property type="project" value="UniProtKB-KW"/>
</dbReference>
<dbReference type="GO" id="GO:0004550">
    <property type="term" value="F:nucleoside diphosphate kinase activity"/>
    <property type="evidence" value="ECO:0007669"/>
    <property type="project" value="UniProtKB-UniRule"/>
</dbReference>
<dbReference type="GO" id="GO:0006241">
    <property type="term" value="P:CTP biosynthetic process"/>
    <property type="evidence" value="ECO:0007669"/>
    <property type="project" value="UniProtKB-UniRule"/>
</dbReference>
<dbReference type="GO" id="GO:0006183">
    <property type="term" value="P:GTP biosynthetic process"/>
    <property type="evidence" value="ECO:0007669"/>
    <property type="project" value="UniProtKB-UniRule"/>
</dbReference>
<dbReference type="GO" id="GO:0006228">
    <property type="term" value="P:UTP biosynthetic process"/>
    <property type="evidence" value="ECO:0007669"/>
    <property type="project" value="UniProtKB-UniRule"/>
</dbReference>
<dbReference type="CDD" id="cd04413">
    <property type="entry name" value="NDPk_I"/>
    <property type="match status" value="1"/>
</dbReference>
<dbReference type="FunFam" id="3.30.70.141:FF:000003">
    <property type="entry name" value="Nucleoside diphosphate kinase"/>
    <property type="match status" value="1"/>
</dbReference>
<dbReference type="Gene3D" id="3.30.70.141">
    <property type="entry name" value="Nucleoside diphosphate kinase-like domain"/>
    <property type="match status" value="1"/>
</dbReference>
<dbReference type="HAMAP" id="MF_00451">
    <property type="entry name" value="NDP_kinase"/>
    <property type="match status" value="1"/>
</dbReference>
<dbReference type="InterPro" id="IPR034907">
    <property type="entry name" value="NDK-like_dom"/>
</dbReference>
<dbReference type="InterPro" id="IPR036850">
    <property type="entry name" value="NDK-like_dom_sf"/>
</dbReference>
<dbReference type="InterPro" id="IPR001564">
    <property type="entry name" value="Nucleoside_diP_kinase"/>
</dbReference>
<dbReference type="NCBIfam" id="NF001908">
    <property type="entry name" value="PRK00668.1"/>
    <property type="match status" value="1"/>
</dbReference>
<dbReference type="PANTHER" id="PTHR11349">
    <property type="entry name" value="NUCLEOSIDE DIPHOSPHATE KINASE"/>
    <property type="match status" value="1"/>
</dbReference>
<dbReference type="Pfam" id="PF00334">
    <property type="entry name" value="NDK"/>
    <property type="match status" value="1"/>
</dbReference>
<dbReference type="PRINTS" id="PR01243">
    <property type="entry name" value="NUCDPKINASE"/>
</dbReference>
<dbReference type="SMART" id="SM00562">
    <property type="entry name" value="NDK"/>
    <property type="match status" value="1"/>
</dbReference>
<dbReference type="SUPFAM" id="SSF54919">
    <property type="entry name" value="Nucleoside diphosphate kinase, NDK"/>
    <property type="match status" value="1"/>
</dbReference>
<dbReference type="PROSITE" id="PS51374">
    <property type="entry name" value="NDPK_LIKE"/>
    <property type="match status" value="1"/>
</dbReference>
<keyword id="KW-0067">ATP-binding</keyword>
<keyword id="KW-0963">Cytoplasm</keyword>
<keyword id="KW-0418">Kinase</keyword>
<keyword id="KW-0460">Magnesium</keyword>
<keyword id="KW-0479">Metal-binding</keyword>
<keyword id="KW-0546">Nucleotide metabolism</keyword>
<keyword id="KW-0547">Nucleotide-binding</keyword>
<keyword id="KW-0597">Phosphoprotein</keyword>
<keyword id="KW-0808">Transferase</keyword>
<comment type="function">
    <text evidence="1">Major role in the synthesis of nucleoside triphosphates other than ATP. The ATP gamma phosphate is transferred to the NDP beta phosphate via a ping-pong mechanism, using a phosphorylated active-site intermediate.</text>
</comment>
<comment type="catalytic activity">
    <reaction evidence="1">
        <text>a 2'-deoxyribonucleoside 5'-diphosphate + ATP = a 2'-deoxyribonucleoside 5'-triphosphate + ADP</text>
        <dbReference type="Rhea" id="RHEA:44640"/>
        <dbReference type="ChEBI" id="CHEBI:30616"/>
        <dbReference type="ChEBI" id="CHEBI:61560"/>
        <dbReference type="ChEBI" id="CHEBI:73316"/>
        <dbReference type="ChEBI" id="CHEBI:456216"/>
        <dbReference type="EC" id="2.7.4.6"/>
    </reaction>
</comment>
<comment type="catalytic activity">
    <reaction evidence="1">
        <text>a ribonucleoside 5'-diphosphate + ATP = a ribonucleoside 5'-triphosphate + ADP</text>
        <dbReference type="Rhea" id="RHEA:18113"/>
        <dbReference type="ChEBI" id="CHEBI:30616"/>
        <dbReference type="ChEBI" id="CHEBI:57930"/>
        <dbReference type="ChEBI" id="CHEBI:61557"/>
        <dbReference type="ChEBI" id="CHEBI:456216"/>
        <dbReference type="EC" id="2.7.4.6"/>
    </reaction>
</comment>
<comment type="cofactor">
    <cofactor evidence="1">
        <name>Mg(2+)</name>
        <dbReference type="ChEBI" id="CHEBI:18420"/>
    </cofactor>
</comment>
<comment type="subunit">
    <text evidence="1">Homotetramer.</text>
</comment>
<comment type="subcellular location">
    <subcellularLocation>
        <location evidence="1">Cytoplasm</location>
    </subcellularLocation>
</comment>
<comment type="similarity">
    <text evidence="1">Belongs to the NDK family.</text>
</comment>
<name>NDK_MYCBP</name>
<feature type="chain" id="PRO_1000026255" description="Nucleoside diphosphate kinase">
    <location>
        <begin position="1"/>
        <end position="136"/>
    </location>
</feature>
<feature type="active site" description="Pros-phosphohistidine intermediate" evidence="1">
    <location>
        <position position="117"/>
    </location>
</feature>
<feature type="binding site" evidence="1">
    <location>
        <position position="10"/>
    </location>
    <ligand>
        <name>ATP</name>
        <dbReference type="ChEBI" id="CHEBI:30616"/>
    </ligand>
</feature>
<feature type="binding site" evidence="1">
    <location>
        <position position="58"/>
    </location>
    <ligand>
        <name>ATP</name>
        <dbReference type="ChEBI" id="CHEBI:30616"/>
    </ligand>
</feature>
<feature type="binding site" evidence="1">
    <location>
        <position position="86"/>
    </location>
    <ligand>
        <name>ATP</name>
        <dbReference type="ChEBI" id="CHEBI:30616"/>
    </ligand>
</feature>
<feature type="binding site" evidence="1">
    <location>
        <position position="92"/>
    </location>
    <ligand>
        <name>ATP</name>
        <dbReference type="ChEBI" id="CHEBI:30616"/>
    </ligand>
</feature>
<feature type="binding site" evidence="1">
    <location>
        <position position="104"/>
    </location>
    <ligand>
        <name>ATP</name>
        <dbReference type="ChEBI" id="CHEBI:30616"/>
    </ligand>
</feature>
<feature type="binding site" evidence="1">
    <location>
        <position position="114"/>
    </location>
    <ligand>
        <name>ATP</name>
        <dbReference type="ChEBI" id="CHEBI:30616"/>
    </ligand>
</feature>
<gene>
    <name evidence="1" type="primary">ndk</name>
    <name type="ordered locus">BCG_2465c</name>
</gene>
<organism>
    <name type="scientific">Mycobacterium bovis (strain BCG / Pasteur 1173P2)</name>
    <dbReference type="NCBI Taxonomy" id="410289"/>
    <lineage>
        <taxon>Bacteria</taxon>
        <taxon>Bacillati</taxon>
        <taxon>Actinomycetota</taxon>
        <taxon>Actinomycetes</taxon>
        <taxon>Mycobacteriales</taxon>
        <taxon>Mycobacteriaceae</taxon>
        <taxon>Mycobacterium</taxon>
        <taxon>Mycobacterium tuberculosis complex</taxon>
    </lineage>
</organism>